<keyword id="KW-0240">DNA-directed RNA polymerase</keyword>
<keyword id="KW-0548">Nucleotidyltransferase</keyword>
<keyword id="KW-1185">Reference proteome</keyword>
<keyword id="KW-0804">Transcription</keyword>
<keyword id="KW-0808">Transferase</keyword>
<dbReference type="EC" id="2.7.7.6" evidence="1"/>
<dbReference type="EMBL" id="CP000830">
    <property type="protein sequence ID" value="ABV91942.1"/>
    <property type="molecule type" value="Genomic_DNA"/>
</dbReference>
<dbReference type="RefSeq" id="WP_012176875.1">
    <property type="nucleotide sequence ID" value="NC_009952.1"/>
</dbReference>
<dbReference type="SMR" id="A8LLD2"/>
<dbReference type="STRING" id="398580.Dshi_0193"/>
<dbReference type="KEGG" id="dsh:Dshi_0193"/>
<dbReference type="eggNOG" id="COG1758">
    <property type="taxonomic scope" value="Bacteria"/>
</dbReference>
<dbReference type="HOGENOM" id="CLU_125406_2_0_5"/>
<dbReference type="OrthoDB" id="9796300at2"/>
<dbReference type="Proteomes" id="UP000006833">
    <property type="component" value="Chromosome"/>
</dbReference>
<dbReference type="GO" id="GO:0000428">
    <property type="term" value="C:DNA-directed RNA polymerase complex"/>
    <property type="evidence" value="ECO:0007669"/>
    <property type="project" value="UniProtKB-KW"/>
</dbReference>
<dbReference type="GO" id="GO:0003677">
    <property type="term" value="F:DNA binding"/>
    <property type="evidence" value="ECO:0007669"/>
    <property type="project" value="UniProtKB-UniRule"/>
</dbReference>
<dbReference type="GO" id="GO:0003899">
    <property type="term" value="F:DNA-directed RNA polymerase activity"/>
    <property type="evidence" value="ECO:0007669"/>
    <property type="project" value="UniProtKB-UniRule"/>
</dbReference>
<dbReference type="GO" id="GO:0006351">
    <property type="term" value="P:DNA-templated transcription"/>
    <property type="evidence" value="ECO:0007669"/>
    <property type="project" value="UniProtKB-UniRule"/>
</dbReference>
<dbReference type="Gene3D" id="3.90.940.10">
    <property type="match status" value="1"/>
</dbReference>
<dbReference type="HAMAP" id="MF_00366">
    <property type="entry name" value="RNApol_bact_RpoZ"/>
    <property type="match status" value="1"/>
</dbReference>
<dbReference type="InterPro" id="IPR003716">
    <property type="entry name" value="DNA-dir_RNA_pol_omega"/>
</dbReference>
<dbReference type="InterPro" id="IPR006110">
    <property type="entry name" value="Pol_omega/Rpo6/RPB6"/>
</dbReference>
<dbReference type="InterPro" id="IPR036161">
    <property type="entry name" value="RPB6/omega-like_sf"/>
</dbReference>
<dbReference type="NCBIfam" id="TIGR00690">
    <property type="entry name" value="rpoZ"/>
    <property type="match status" value="1"/>
</dbReference>
<dbReference type="PANTHER" id="PTHR34476">
    <property type="entry name" value="DNA-DIRECTED RNA POLYMERASE SUBUNIT OMEGA"/>
    <property type="match status" value="1"/>
</dbReference>
<dbReference type="PANTHER" id="PTHR34476:SF1">
    <property type="entry name" value="DNA-DIRECTED RNA POLYMERASE SUBUNIT OMEGA"/>
    <property type="match status" value="1"/>
</dbReference>
<dbReference type="Pfam" id="PF01192">
    <property type="entry name" value="RNA_pol_Rpb6"/>
    <property type="match status" value="1"/>
</dbReference>
<dbReference type="SMART" id="SM01409">
    <property type="entry name" value="RNA_pol_Rpb6"/>
    <property type="match status" value="1"/>
</dbReference>
<dbReference type="SUPFAM" id="SSF63562">
    <property type="entry name" value="RPB6/omega subunit-like"/>
    <property type="match status" value="1"/>
</dbReference>
<comment type="function">
    <text evidence="1">Promotes RNA polymerase assembly. Latches the N- and C-terminal regions of the beta' subunit thereby facilitating its interaction with the beta and alpha subunits.</text>
</comment>
<comment type="catalytic activity">
    <reaction evidence="1">
        <text>RNA(n) + a ribonucleoside 5'-triphosphate = RNA(n+1) + diphosphate</text>
        <dbReference type="Rhea" id="RHEA:21248"/>
        <dbReference type="Rhea" id="RHEA-COMP:14527"/>
        <dbReference type="Rhea" id="RHEA-COMP:17342"/>
        <dbReference type="ChEBI" id="CHEBI:33019"/>
        <dbReference type="ChEBI" id="CHEBI:61557"/>
        <dbReference type="ChEBI" id="CHEBI:140395"/>
        <dbReference type="EC" id="2.7.7.6"/>
    </reaction>
</comment>
<comment type="subunit">
    <text evidence="1">The RNAP catalytic core consists of 2 alpha, 1 beta, 1 beta' and 1 omega subunit. When a sigma factor is associated with the core the holoenzyme is formed, which can initiate transcription.</text>
</comment>
<comment type="similarity">
    <text evidence="1">Belongs to the RNA polymerase subunit omega family.</text>
</comment>
<proteinExistence type="inferred from homology"/>
<reference key="1">
    <citation type="journal article" date="2010" name="ISME J.">
        <title>The complete genome sequence of the algal symbiont Dinoroseobacter shibae: a hitchhiker's guide to life in the sea.</title>
        <authorList>
            <person name="Wagner-Dobler I."/>
            <person name="Ballhausen B."/>
            <person name="Berger M."/>
            <person name="Brinkhoff T."/>
            <person name="Buchholz I."/>
            <person name="Bunk B."/>
            <person name="Cypionka H."/>
            <person name="Daniel R."/>
            <person name="Drepper T."/>
            <person name="Gerdts G."/>
            <person name="Hahnke S."/>
            <person name="Han C."/>
            <person name="Jahn D."/>
            <person name="Kalhoefer D."/>
            <person name="Kiss H."/>
            <person name="Klenk H.P."/>
            <person name="Kyrpides N."/>
            <person name="Liebl W."/>
            <person name="Liesegang H."/>
            <person name="Meincke L."/>
            <person name="Pati A."/>
            <person name="Petersen J."/>
            <person name="Piekarski T."/>
            <person name="Pommerenke C."/>
            <person name="Pradella S."/>
            <person name="Pukall R."/>
            <person name="Rabus R."/>
            <person name="Stackebrandt E."/>
            <person name="Thole S."/>
            <person name="Thompson L."/>
            <person name="Tielen P."/>
            <person name="Tomasch J."/>
            <person name="von Jan M."/>
            <person name="Wanphrut N."/>
            <person name="Wichels A."/>
            <person name="Zech H."/>
            <person name="Simon M."/>
        </authorList>
    </citation>
    <scope>NUCLEOTIDE SEQUENCE [LARGE SCALE GENOMIC DNA]</scope>
    <source>
        <strain>DSM 16493 / NCIMB 14021 / DFL 12</strain>
    </source>
</reference>
<sequence>MARVTVEDCVDKVPNRFELVMLAAHRAREISAGSELTIDRDNDKNPVVSLREIAEETQSADALRERLIESNQTQIEVDEPEEDSMAMLMGGGQPDKPAEDDMSEEKLLRALMEAQGQP</sequence>
<gene>
    <name evidence="1" type="primary">rpoZ</name>
    <name type="ordered locus">Dshi_0193</name>
</gene>
<accession>A8LLD2</accession>
<evidence type="ECO:0000255" key="1">
    <source>
        <dbReference type="HAMAP-Rule" id="MF_00366"/>
    </source>
</evidence>
<evidence type="ECO:0000256" key="2">
    <source>
        <dbReference type="SAM" id="MobiDB-lite"/>
    </source>
</evidence>
<feature type="chain" id="PRO_1000079627" description="DNA-directed RNA polymerase subunit omega">
    <location>
        <begin position="1"/>
        <end position="118"/>
    </location>
</feature>
<feature type="region of interest" description="Disordered" evidence="2">
    <location>
        <begin position="78"/>
        <end position="104"/>
    </location>
</feature>
<name>RPOZ_DINSH</name>
<protein>
    <recommendedName>
        <fullName evidence="1">DNA-directed RNA polymerase subunit omega</fullName>
        <shortName evidence="1">RNAP omega subunit</shortName>
        <ecNumber evidence="1">2.7.7.6</ecNumber>
    </recommendedName>
    <alternativeName>
        <fullName evidence="1">RNA polymerase omega subunit</fullName>
    </alternativeName>
    <alternativeName>
        <fullName evidence="1">Transcriptase subunit omega</fullName>
    </alternativeName>
</protein>
<organism>
    <name type="scientific">Dinoroseobacter shibae (strain DSM 16493 / NCIMB 14021 / DFL 12)</name>
    <dbReference type="NCBI Taxonomy" id="398580"/>
    <lineage>
        <taxon>Bacteria</taxon>
        <taxon>Pseudomonadati</taxon>
        <taxon>Pseudomonadota</taxon>
        <taxon>Alphaproteobacteria</taxon>
        <taxon>Rhodobacterales</taxon>
        <taxon>Roseobacteraceae</taxon>
        <taxon>Dinoroseobacter</taxon>
    </lineage>
</organism>